<sequence length="132" mass="13961">MAAQKQAARKPRRRDRKSVPVGQAHIKSTFNNTIISITDPSGAVVSWASGGDVGFKGSRKSTPYAAGMAAESAARKAMEHGLKKVDVFVKGPGSGRETAIRSLQSAGLEVGSITDVTPQAHNGVRPPKRRRV</sequence>
<protein>
    <recommendedName>
        <fullName evidence="1">Small ribosomal subunit protein uS11</fullName>
    </recommendedName>
    <alternativeName>
        <fullName evidence="3">30S ribosomal protein S11</fullName>
    </alternativeName>
</protein>
<reference key="1">
    <citation type="submission" date="2006-12" db="EMBL/GenBank/DDBJ databases">
        <title>Bifidobacterium adolescentis complete genome sequence.</title>
        <authorList>
            <person name="Suzuki T."/>
            <person name="Tsuda Y."/>
            <person name="Kanou N."/>
            <person name="Inoue T."/>
            <person name="Kumazaki K."/>
            <person name="Nagano S."/>
            <person name="Hirai S."/>
            <person name="Tanaka K."/>
            <person name="Watanabe K."/>
        </authorList>
    </citation>
    <scope>NUCLEOTIDE SEQUENCE [LARGE SCALE GENOMIC DNA]</scope>
    <source>
        <strain>ATCC 15703 / DSM 20083 / NCTC 11814 / E194a</strain>
    </source>
</reference>
<feature type="chain" id="PRO_0000294721" description="Small ribosomal subunit protein uS11">
    <location>
        <begin position="1"/>
        <end position="132"/>
    </location>
</feature>
<feature type="region of interest" description="Disordered" evidence="2">
    <location>
        <begin position="1"/>
        <end position="24"/>
    </location>
</feature>
<feature type="compositionally biased region" description="Basic residues" evidence="2">
    <location>
        <begin position="7"/>
        <end position="16"/>
    </location>
</feature>
<comment type="function">
    <text evidence="1">Located on the platform of the 30S subunit, it bridges several disparate RNA helices of the 16S rRNA. Forms part of the Shine-Dalgarno cleft in the 70S ribosome.</text>
</comment>
<comment type="subunit">
    <text evidence="1">Part of the 30S ribosomal subunit. Interacts with proteins S7 and S18. Binds to IF-3.</text>
</comment>
<comment type="similarity">
    <text evidence="1">Belongs to the universal ribosomal protein uS11 family.</text>
</comment>
<gene>
    <name evidence="1" type="primary">rpsK</name>
    <name type="ordered locus">BAD_0346</name>
</gene>
<accession>A1A094</accession>
<organism>
    <name type="scientific">Bifidobacterium adolescentis (strain ATCC 15703 / DSM 20083 / NCTC 11814 / E194a)</name>
    <dbReference type="NCBI Taxonomy" id="367928"/>
    <lineage>
        <taxon>Bacteria</taxon>
        <taxon>Bacillati</taxon>
        <taxon>Actinomycetota</taxon>
        <taxon>Actinomycetes</taxon>
        <taxon>Bifidobacteriales</taxon>
        <taxon>Bifidobacteriaceae</taxon>
        <taxon>Bifidobacterium</taxon>
    </lineage>
</organism>
<keyword id="KW-1185">Reference proteome</keyword>
<keyword id="KW-0687">Ribonucleoprotein</keyword>
<keyword id="KW-0689">Ribosomal protein</keyword>
<keyword id="KW-0694">RNA-binding</keyword>
<keyword id="KW-0699">rRNA-binding</keyword>
<dbReference type="EMBL" id="AP009256">
    <property type="protein sequence ID" value="BAF39127.1"/>
    <property type="molecule type" value="Genomic_DNA"/>
</dbReference>
<dbReference type="RefSeq" id="WP_003808141.1">
    <property type="nucleotide sequence ID" value="NZ_CAXVNC010000001.1"/>
</dbReference>
<dbReference type="SMR" id="A1A094"/>
<dbReference type="STRING" id="367928.BAD_0346"/>
<dbReference type="PaxDb" id="1680-BADO_0353"/>
<dbReference type="GeneID" id="45598879"/>
<dbReference type="KEGG" id="bad:BAD_0346"/>
<dbReference type="HOGENOM" id="CLU_072439_5_0_11"/>
<dbReference type="Proteomes" id="UP000008702">
    <property type="component" value="Chromosome"/>
</dbReference>
<dbReference type="GO" id="GO:1990904">
    <property type="term" value="C:ribonucleoprotein complex"/>
    <property type="evidence" value="ECO:0007669"/>
    <property type="project" value="UniProtKB-KW"/>
</dbReference>
<dbReference type="GO" id="GO:0005840">
    <property type="term" value="C:ribosome"/>
    <property type="evidence" value="ECO:0007669"/>
    <property type="project" value="UniProtKB-KW"/>
</dbReference>
<dbReference type="GO" id="GO:0019843">
    <property type="term" value="F:rRNA binding"/>
    <property type="evidence" value="ECO:0007669"/>
    <property type="project" value="UniProtKB-UniRule"/>
</dbReference>
<dbReference type="GO" id="GO:0003735">
    <property type="term" value="F:structural constituent of ribosome"/>
    <property type="evidence" value="ECO:0007669"/>
    <property type="project" value="InterPro"/>
</dbReference>
<dbReference type="GO" id="GO:0006412">
    <property type="term" value="P:translation"/>
    <property type="evidence" value="ECO:0007669"/>
    <property type="project" value="UniProtKB-UniRule"/>
</dbReference>
<dbReference type="FunFam" id="3.30.420.80:FF:000001">
    <property type="entry name" value="30S ribosomal protein S11"/>
    <property type="match status" value="1"/>
</dbReference>
<dbReference type="Gene3D" id="3.30.420.80">
    <property type="entry name" value="Ribosomal protein S11"/>
    <property type="match status" value="1"/>
</dbReference>
<dbReference type="HAMAP" id="MF_01310">
    <property type="entry name" value="Ribosomal_uS11"/>
    <property type="match status" value="1"/>
</dbReference>
<dbReference type="InterPro" id="IPR001971">
    <property type="entry name" value="Ribosomal_uS11"/>
</dbReference>
<dbReference type="InterPro" id="IPR019981">
    <property type="entry name" value="Ribosomal_uS11_bac-type"/>
</dbReference>
<dbReference type="InterPro" id="IPR018102">
    <property type="entry name" value="Ribosomal_uS11_CS"/>
</dbReference>
<dbReference type="InterPro" id="IPR036967">
    <property type="entry name" value="Ribosomal_uS11_sf"/>
</dbReference>
<dbReference type="NCBIfam" id="NF003698">
    <property type="entry name" value="PRK05309.1"/>
    <property type="match status" value="1"/>
</dbReference>
<dbReference type="NCBIfam" id="TIGR03632">
    <property type="entry name" value="uS11_bact"/>
    <property type="match status" value="1"/>
</dbReference>
<dbReference type="PANTHER" id="PTHR11759">
    <property type="entry name" value="40S RIBOSOMAL PROTEIN S14/30S RIBOSOMAL PROTEIN S11"/>
    <property type="match status" value="1"/>
</dbReference>
<dbReference type="Pfam" id="PF00411">
    <property type="entry name" value="Ribosomal_S11"/>
    <property type="match status" value="1"/>
</dbReference>
<dbReference type="PIRSF" id="PIRSF002131">
    <property type="entry name" value="Ribosomal_S11"/>
    <property type="match status" value="1"/>
</dbReference>
<dbReference type="SUPFAM" id="SSF53137">
    <property type="entry name" value="Translational machinery components"/>
    <property type="match status" value="1"/>
</dbReference>
<dbReference type="PROSITE" id="PS00054">
    <property type="entry name" value="RIBOSOMAL_S11"/>
    <property type="match status" value="1"/>
</dbReference>
<proteinExistence type="inferred from homology"/>
<evidence type="ECO:0000255" key="1">
    <source>
        <dbReference type="HAMAP-Rule" id="MF_01310"/>
    </source>
</evidence>
<evidence type="ECO:0000256" key="2">
    <source>
        <dbReference type="SAM" id="MobiDB-lite"/>
    </source>
</evidence>
<evidence type="ECO:0000305" key="3"/>
<name>RS11_BIFAA</name>